<gene>
    <name evidence="1" type="primary">hisF</name>
    <name type="ordered locus">Shewmr7_2183</name>
</gene>
<dbReference type="EC" id="4.3.2.10" evidence="1"/>
<dbReference type="EMBL" id="CP000444">
    <property type="protein sequence ID" value="ABI43171.1"/>
    <property type="molecule type" value="Genomic_DNA"/>
</dbReference>
<dbReference type="SMR" id="Q0HUN4"/>
<dbReference type="KEGG" id="shm:Shewmr7_2183"/>
<dbReference type="HOGENOM" id="CLU_048577_4_0_6"/>
<dbReference type="UniPathway" id="UPA00031">
    <property type="reaction ID" value="UER00010"/>
</dbReference>
<dbReference type="GO" id="GO:0005737">
    <property type="term" value="C:cytoplasm"/>
    <property type="evidence" value="ECO:0007669"/>
    <property type="project" value="UniProtKB-SubCell"/>
</dbReference>
<dbReference type="GO" id="GO:0000107">
    <property type="term" value="F:imidazoleglycerol-phosphate synthase activity"/>
    <property type="evidence" value="ECO:0007669"/>
    <property type="project" value="UniProtKB-UniRule"/>
</dbReference>
<dbReference type="GO" id="GO:0016829">
    <property type="term" value="F:lyase activity"/>
    <property type="evidence" value="ECO:0007669"/>
    <property type="project" value="UniProtKB-KW"/>
</dbReference>
<dbReference type="GO" id="GO:0000105">
    <property type="term" value="P:L-histidine biosynthetic process"/>
    <property type="evidence" value="ECO:0007669"/>
    <property type="project" value="UniProtKB-UniRule"/>
</dbReference>
<dbReference type="CDD" id="cd04731">
    <property type="entry name" value="HisF"/>
    <property type="match status" value="1"/>
</dbReference>
<dbReference type="FunFam" id="3.20.20.70:FF:000006">
    <property type="entry name" value="Imidazole glycerol phosphate synthase subunit HisF"/>
    <property type="match status" value="1"/>
</dbReference>
<dbReference type="Gene3D" id="3.20.20.70">
    <property type="entry name" value="Aldolase class I"/>
    <property type="match status" value="1"/>
</dbReference>
<dbReference type="HAMAP" id="MF_01013">
    <property type="entry name" value="HisF"/>
    <property type="match status" value="1"/>
</dbReference>
<dbReference type="InterPro" id="IPR013785">
    <property type="entry name" value="Aldolase_TIM"/>
</dbReference>
<dbReference type="InterPro" id="IPR006062">
    <property type="entry name" value="His_biosynth"/>
</dbReference>
<dbReference type="InterPro" id="IPR004651">
    <property type="entry name" value="HisF"/>
</dbReference>
<dbReference type="InterPro" id="IPR050064">
    <property type="entry name" value="IGPS_HisA/HisF"/>
</dbReference>
<dbReference type="InterPro" id="IPR011060">
    <property type="entry name" value="RibuloseP-bd_barrel"/>
</dbReference>
<dbReference type="NCBIfam" id="TIGR00735">
    <property type="entry name" value="hisF"/>
    <property type="match status" value="1"/>
</dbReference>
<dbReference type="PANTHER" id="PTHR21235:SF2">
    <property type="entry name" value="IMIDAZOLE GLYCEROL PHOSPHATE SYNTHASE HISHF"/>
    <property type="match status" value="1"/>
</dbReference>
<dbReference type="PANTHER" id="PTHR21235">
    <property type="entry name" value="IMIDAZOLE GLYCEROL PHOSPHATE SYNTHASE SUBUNIT HISF/H IGP SYNTHASE SUBUNIT HISF/H"/>
    <property type="match status" value="1"/>
</dbReference>
<dbReference type="Pfam" id="PF00977">
    <property type="entry name" value="His_biosynth"/>
    <property type="match status" value="1"/>
</dbReference>
<dbReference type="SUPFAM" id="SSF51366">
    <property type="entry name" value="Ribulose-phoshate binding barrel"/>
    <property type="match status" value="1"/>
</dbReference>
<proteinExistence type="inferred from homology"/>
<accession>Q0HUN4</accession>
<keyword id="KW-0028">Amino-acid biosynthesis</keyword>
<keyword id="KW-0963">Cytoplasm</keyword>
<keyword id="KW-0368">Histidine biosynthesis</keyword>
<keyword id="KW-0456">Lyase</keyword>
<protein>
    <recommendedName>
        <fullName evidence="1">Imidazole glycerol phosphate synthase subunit HisF</fullName>
        <ecNumber evidence="1">4.3.2.10</ecNumber>
    </recommendedName>
    <alternativeName>
        <fullName evidence="1">IGP synthase cyclase subunit</fullName>
    </alternativeName>
    <alternativeName>
        <fullName evidence="1">IGP synthase subunit HisF</fullName>
    </alternativeName>
    <alternativeName>
        <fullName evidence="1">ImGP synthase subunit HisF</fullName>
        <shortName evidence="1">IGPS subunit HisF</shortName>
    </alternativeName>
</protein>
<name>HIS6_SHESR</name>
<sequence>MLAKRIVPCLDVKDGCVVKGVQFRNHEIVGDIVPLAARYAAEGADELVFYDITASAHDRVVDKSWVSRVAEQIDIPFCVAGGIKTIGQARELLAFGADKISVNSPALSDPSLISRLQDEFGRQCIVIGIDSFYDAASDSYKVKQFTGDEAATKETAWYTQDWVEEVQKRGCGEIVLNVMNQDGVRGGYDIKQLSLVRQLCDVPLIASGGAGTMAHFRDVFIEAKVDAALAASVFHKAIINIGELKQYLAAEGIAIRL</sequence>
<evidence type="ECO:0000255" key="1">
    <source>
        <dbReference type="HAMAP-Rule" id="MF_01013"/>
    </source>
</evidence>
<feature type="chain" id="PRO_1000063150" description="Imidazole glycerol phosphate synthase subunit HisF">
    <location>
        <begin position="1"/>
        <end position="257"/>
    </location>
</feature>
<feature type="active site" evidence="1">
    <location>
        <position position="11"/>
    </location>
</feature>
<feature type="active site" evidence="1">
    <location>
        <position position="130"/>
    </location>
</feature>
<comment type="function">
    <text evidence="1">IGPS catalyzes the conversion of PRFAR and glutamine to IGP, AICAR and glutamate. The HisF subunit catalyzes the cyclization activity that produces IGP and AICAR from PRFAR using the ammonia provided by the HisH subunit.</text>
</comment>
<comment type="catalytic activity">
    <reaction evidence="1">
        <text>5-[(5-phospho-1-deoxy-D-ribulos-1-ylimino)methylamino]-1-(5-phospho-beta-D-ribosyl)imidazole-4-carboxamide + L-glutamine = D-erythro-1-(imidazol-4-yl)glycerol 3-phosphate + 5-amino-1-(5-phospho-beta-D-ribosyl)imidazole-4-carboxamide + L-glutamate + H(+)</text>
        <dbReference type="Rhea" id="RHEA:24793"/>
        <dbReference type="ChEBI" id="CHEBI:15378"/>
        <dbReference type="ChEBI" id="CHEBI:29985"/>
        <dbReference type="ChEBI" id="CHEBI:58278"/>
        <dbReference type="ChEBI" id="CHEBI:58359"/>
        <dbReference type="ChEBI" id="CHEBI:58475"/>
        <dbReference type="ChEBI" id="CHEBI:58525"/>
        <dbReference type="EC" id="4.3.2.10"/>
    </reaction>
</comment>
<comment type="pathway">
    <text evidence="1">Amino-acid biosynthesis; L-histidine biosynthesis; L-histidine from 5-phospho-alpha-D-ribose 1-diphosphate: step 5/9.</text>
</comment>
<comment type="subunit">
    <text evidence="1">Heterodimer of HisH and HisF.</text>
</comment>
<comment type="subcellular location">
    <subcellularLocation>
        <location evidence="1">Cytoplasm</location>
    </subcellularLocation>
</comment>
<comment type="similarity">
    <text evidence="1">Belongs to the HisA/HisF family.</text>
</comment>
<organism>
    <name type="scientific">Shewanella sp. (strain MR-7)</name>
    <dbReference type="NCBI Taxonomy" id="60481"/>
    <lineage>
        <taxon>Bacteria</taxon>
        <taxon>Pseudomonadati</taxon>
        <taxon>Pseudomonadota</taxon>
        <taxon>Gammaproteobacteria</taxon>
        <taxon>Alteromonadales</taxon>
        <taxon>Shewanellaceae</taxon>
        <taxon>Shewanella</taxon>
    </lineage>
</organism>
<reference key="1">
    <citation type="submission" date="2006-08" db="EMBL/GenBank/DDBJ databases">
        <title>Complete sequence of chromosome 1 of Shewanella sp. MR-7.</title>
        <authorList>
            <person name="Copeland A."/>
            <person name="Lucas S."/>
            <person name="Lapidus A."/>
            <person name="Barry K."/>
            <person name="Detter J.C."/>
            <person name="Glavina del Rio T."/>
            <person name="Hammon N."/>
            <person name="Israni S."/>
            <person name="Dalin E."/>
            <person name="Tice H."/>
            <person name="Pitluck S."/>
            <person name="Kiss H."/>
            <person name="Brettin T."/>
            <person name="Bruce D."/>
            <person name="Han C."/>
            <person name="Tapia R."/>
            <person name="Gilna P."/>
            <person name="Schmutz J."/>
            <person name="Larimer F."/>
            <person name="Land M."/>
            <person name="Hauser L."/>
            <person name="Kyrpides N."/>
            <person name="Mikhailova N."/>
            <person name="Nealson K."/>
            <person name="Konstantinidis K."/>
            <person name="Klappenbach J."/>
            <person name="Tiedje J."/>
            <person name="Richardson P."/>
        </authorList>
    </citation>
    <scope>NUCLEOTIDE SEQUENCE [LARGE SCALE GENOMIC DNA]</scope>
    <source>
        <strain>MR-7</strain>
    </source>
</reference>